<gene>
    <name evidence="15 19" type="primary">ATP9A</name>
    <name type="synonym">ATPIIA</name>
    <name type="synonym">KIAA0611</name>
</gene>
<sequence>MTDNIPLQPVRQKKRMDSRPRAGCCEWLRCCGGGEARPRTVWLGHPEKRDQRYPRNVINNQKYNFFTFLPGVLFNQFKYFFNLYFLLLACSQFVPEMRLGALYTYWVPLGFVLAVTVIREAVEEIRCYVRDKEVNSQVYSRLTARGTVKVKSSNIQVGDLIIVEKNQRVPADMIFLRTSEKNGSCFLRTDQLDGETDWKLRLPVACTQRLPTAADLLQIRSYVYAEEPNIDIHNFVGTFTREDSDPPISESLSIENTLWAGTVVASGTVVGVVLYTGRELRSVMNTSNPRSKIGLFDLEVNCLTKILFGALVVVSLVMVALQHFAGRWYLQIIRFLLLFSNIIPISLRVNLDMGKIVYSWVIRRDSKIPGTVVRSSTIPEQLGRISYLLTDKTGTLTQNEMIFKRLHLGTVAYGLDSMDEVQSHIFSIYTQQSQDPPAQKGPTLTTKVRRTMSSRVHEAVKAIALCHNVTPVYESNGVTDQAEAEKQYEDSCRVYQASSPDEVALVQWTESVGLTLVGRDQSSMQLRTPGDQILNFTILQIFPFTYESKRMGIIVRDESTGEITFYMKGADVVMAGIVQYNDWLEEECGNMAREGLRVLVVAKKSLAEEQYQDFEARYVQAKLSVHDRSLKVATVIESLEMEMELLCLTGVEDQLQADVRPTLETLRNAGIKVWMLTGDKLETATCTAKNAHLVTRNQDIHVFRLVTNRGEAHLELNAFRRKHDCALVISGDSLEVCLKYYEYEFMELACQCPAVVCCRCAPTQKAQIVRLLQERTGKLTCAVGDGGNDVSMIQESDCGVGVEGKEGKQASLAADFSITQFKHLGRLLMVHGRNSYKRSAALSQFVIHRSLCISTMQAVFSSVFYFASVPLYQGFLIIGYSTIYTMFPVFSLVLDKDVKSEVAMLYPELYKDLLKGRPLSYKTFLIWVLISIYQGSTIMYGALLLFESEFVHIVAISFTSLILTELLMVALTIQTWHWLMTVAELLSLACYIASLVFLHEFIDVYFIATLSFLWKVSVITLVSCLPLYVLKYLRRRFSPPSYSKLTS</sequence>
<dbReference type="EC" id="7.6.2.1" evidence="18"/>
<dbReference type="EMBL" id="AL035684">
    <property type="status" value="NOT_ANNOTATED_CDS"/>
    <property type="molecule type" value="Genomic_DNA"/>
</dbReference>
<dbReference type="EMBL" id="AL138807">
    <property type="status" value="NOT_ANNOTATED_CDS"/>
    <property type="molecule type" value="Genomic_DNA"/>
</dbReference>
<dbReference type="EMBL" id="AL353799">
    <property type="status" value="NOT_ANNOTATED_CDS"/>
    <property type="molecule type" value="Genomic_DNA"/>
</dbReference>
<dbReference type="EMBL" id="CH471077">
    <property type="protein sequence ID" value="EAW75597.1"/>
    <property type="molecule type" value="Genomic_DNA"/>
</dbReference>
<dbReference type="EMBL" id="CH471077">
    <property type="protein sequence ID" value="EAW75598.1"/>
    <property type="molecule type" value="Genomic_DNA"/>
</dbReference>
<dbReference type="EMBL" id="CH471077">
    <property type="protein sequence ID" value="EAW75599.1"/>
    <property type="molecule type" value="Genomic_DNA"/>
</dbReference>
<dbReference type="EMBL" id="CH471077">
    <property type="protein sequence ID" value="EAW75600.1"/>
    <property type="molecule type" value="Genomic_DNA"/>
</dbReference>
<dbReference type="EMBL" id="AB014511">
    <property type="protein sequence ID" value="BAA31586.1"/>
    <property type="molecule type" value="mRNA"/>
</dbReference>
<dbReference type="EMBL" id="AK172802">
    <property type="protein sequence ID" value="BAD18775.1"/>
    <property type="status" value="ALT_INIT"/>
    <property type="molecule type" value="mRNA"/>
</dbReference>
<dbReference type="CCDS" id="CCDS33489.1">
    <molecule id="O75110-1"/>
</dbReference>
<dbReference type="RefSeq" id="NP_006036.1">
    <molecule id="O75110-1"/>
    <property type="nucleotide sequence ID" value="NM_006045.3"/>
</dbReference>
<dbReference type="SMR" id="O75110"/>
<dbReference type="BioGRID" id="115389">
    <property type="interactions" value="99"/>
</dbReference>
<dbReference type="CORUM" id="O75110"/>
<dbReference type="FunCoup" id="O75110">
    <property type="interactions" value="1240"/>
</dbReference>
<dbReference type="IntAct" id="O75110">
    <property type="interactions" value="68"/>
</dbReference>
<dbReference type="MINT" id="O75110"/>
<dbReference type="STRING" id="9606.ENSP00000342481"/>
<dbReference type="TCDB" id="3.A.3.8.16">
    <property type="family name" value="the p-type atpase (p-atpase) superfamily"/>
</dbReference>
<dbReference type="iPTMnet" id="O75110"/>
<dbReference type="PhosphoSitePlus" id="O75110"/>
<dbReference type="SwissPalm" id="O75110"/>
<dbReference type="BioMuta" id="ATP9A"/>
<dbReference type="jPOST" id="O75110"/>
<dbReference type="MassIVE" id="O75110"/>
<dbReference type="PaxDb" id="9606-ENSP00000342481"/>
<dbReference type="PeptideAtlas" id="O75110"/>
<dbReference type="ProteomicsDB" id="49763">
    <molecule id="O75110-1"/>
</dbReference>
<dbReference type="ProteomicsDB" id="49764">
    <molecule id="O75110-2"/>
</dbReference>
<dbReference type="Pumba" id="O75110"/>
<dbReference type="Antibodypedia" id="28658">
    <property type="antibodies" value="66 antibodies from 15 providers"/>
</dbReference>
<dbReference type="DNASU" id="10079"/>
<dbReference type="Ensembl" id="ENST00000338821.6">
    <molecule id="O75110-1"/>
    <property type="protein sequence ID" value="ENSP00000342481.5"/>
    <property type="gene ID" value="ENSG00000054793.14"/>
</dbReference>
<dbReference type="GeneID" id="10079"/>
<dbReference type="KEGG" id="hsa:10079"/>
<dbReference type="MANE-Select" id="ENST00000338821.6">
    <property type="protein sequence ID" value="ENSP00000342481.5"/>
    <property type="RefSeq nucleotide sequence ID" value="NM_006045.3"/>
    <property type="RefSeq protein sequence ID" value="NP_006036.1"/>
</dbReference>
<dbReference type="UCSC" id="uc002xwg.2">
    <molecule id="O75110-1"/>
    <property type="organism name" value="human"/>
</dbReference>
<dbReference type="AGR" id="HGNC:13540"/>
<dbReference type="CTD" id="10079"/>
<dbReference type="DisGeNET" id="10079"/>
<dbReference type="GeneCards" id="ATP9A"/>
<dbReference type="HGNC" id="HGNC:13540">
    <property type="gene designation" value="ATP9A"/>
</dbReference>
<dbReference type="HPA" id="ENSG00000054793">
    <property type="expression patterns" value="Tissue enhanced (brain)"/>
</dbReference>
<dbReference type="MalaCards" id="ATP9A"/>
<dbReference type="MIM" id="609126">
    <property type="type" value="gene"/>
</dbReference>
<dbReference type="MIM" id="620242">
    <property type="type" value="phenotype"/>
</dbReference>
<dbReference type="neXtProt" id="NX_O75110"/>
<dbReference type="OpenTargets" id="ENSG00000054793"/>
<dbReference type="Orphanet" id="528084">
    <property type="disease" value="Non-specific syndromic intellectual disability"/>
</dbReference>
<dbReference type="PharmGKB" id="PA25171"/>
<dbReference type="VEuPathDB" id="HostDB:ENSG00000054793"/>
<dbReference type="eggNOG" id="KOG0210">
    <property type="taxonomic scope" value="Eukaryota"/>
</dbReference>
<dbReference type="GeneTree" id="ENSGT00940000159181"/>
<dbReference type="InParanoid" id="O75110"/>
<dbReference type="OMA" id="XVYFIAT"/>
<dbReference type="OrthoDB" id="377733at2759"/>
<dbReference type="PAN-GO" id="O75110">
    <property type="GO annotations" value="7 GO annotations based on evolutionary models"/>
</dbReference>
<dbReference type="PhylomeDB" id="O75110"/>
<dbReference type="TreeFam" id="TF300590"/>
<dbReference type="BRENDA" id="7.6.2.1">
    <property type="organism ID" value="2681"/>
</dbReference>
<dbReference type="PathwayCommons" id="O75110"/>
<dbReference type="Reactome" id="R-HSA-936837">
    <property type="pathway name" value="Ion transport by P-type ATPases"/>
</dbReference>
<dbReference type="SignaLink" id="O75110"/>
<dbReference type="BioGRID-ORCS" id="10079">
    <property type="hits" value="20 hits in 1147 CRISPR screens"/>
</dbReference>
<dbReference type="ChiTaRS" id="ATP9A">
    <property type="organism name" value="human"/>
</dbReference>
<dbReference type="GenomeRNAi" id="10079"/>
<dbReference type="Pharos" id="O75110">
    <property type="development level" value="Tbio"/>
</dbReference>
<dbReference type="PRO" id="PR:O75110"/>
<dbReference type="Proteomes" id="UP000005640">
    <property type="component" value="Chromosome 20"/>
</dbReference>
<dbReference type="RNAct" id="O75110">
    <property type="molecule type" value="protein"/>
</dbReference>
<dbReference type="Bgee" id="ENSG00000054793">
    <property type="expression patterns" value="Expressed in middle temporal gyrus and 215 other cell types or tissues"/>
</dbReference>
<dbReference type="ExpressionAtlas" id="O75110">
    <property type="expression patterns" value="baseline and differential"/>
</dbReference>
<dbReference type="GO" id="GO:0005769">
    <property type="term" value="C:early endosome"/>
    <property type="evidence" value="ECO:0000314"/>
    <property type="project" value="UniProtKB"/>
</dbReference>
<dbReference type="GO" id="GO:0031901">
    <property type="term" value="C:early endosome membrane"/>
    <property type="evidence" value="ECO:0000314"/>
    <property type="project" value="UniProtKB"/>
</dbReference>
<dbReference type="GO" id="GO:0005768">
    <property type="term" value="C:endosome"/>
    <property type="evidence" value="ECO:0000318"/>
    <property type="project" value="GO_Central"/>
</dbReference>
<dbReference type="GO" id="GO:0005770">
    <property type="term" value="C:late endosome"/>
    <property type="evidence" value="ECO:0000314"/>
    <property type="project" value="UniProtKB"/>
</dbReference>
<dbReference type="GO" id="GO:0031902">
    <property type="term" value="C:late endosome membrane"/>
    <property type="evidence" value="ECO:0007669"/>
    <property type="project" value="UniProtKB-SubCell"/>
</dbReference>
<dbReference type="GO" id="GO:0048471">
    <property type="term" value="C:perinuclear region of cytoplasm"/>
    <property type="evidence" value="ECO:0000314"/>
    <property type="project" value="UniProtKB"/>
</dbReference>
<dbReference type="GO" id="GO:0005886">
    <property type="term" value="C:plasma membrane"/>
    <property type="evidence" value="ECO:0000314"/>
    <property type="project" value="UniProtKB"/>
</dbReference>
<dbReference type="GO" id="GO:0055037">
    <property type="term" value="C:recycling endosome"/>
    <property type="evidence" value="ECO:0000314"/>
    <property type="project" value="UniProtKB"/>
</dbReference>
<dbReference type="GO" id="GO:0055038">
    <property type="term" value="C:recycling endosome membrane"/>
    <property type="evidence" value="ECO:0000314"/>
    <property type="project" value="UniProtKB"/>
</dbReference>
<dbReference type="GO" id="GO:0005802">
    <property type="term" value="C:trans-Golgi network"/>
    <property type="evidence" value="ECO:0000314"/>
    <property type="project" value="UniProtKB"/>
</dbReference>
<dbReference type="GO" id="GO:0032588">
    <property type="term" value="C:trans-Golgi network membrane"/>
    <property type="evidence" value="ECO:0000314"/>
    <property type="project" value="UniProtKB"/>
</dbReference>
<dbReference type="GO" id="GO:0005524">
    <property type="term" value="F:ATP binding"/>
    <property type="evidence" value="ECO:0007669"/>
    <property type="project" value="UniProtKB-KW"/>
</dbReference>
<dbReference type="GO" id="GO:0016887">
    <property type="term" value="F:ATP hydrolysis activity"/>
    <property type="evidence" value="ECO:0007669"/>
    <property type="project" value="InterPro"/>
</dbReference>
<dbReference type="GO" id="GO:0140326">
    <property type="term" value="F:ATPase-coupled intramembrane lipid transporter activity"/>
    <property type="evidence" value="ECO:0000318"/>
    <property type="project" value="GO_Central"/>
</dbReference>
<dbReference type="GO" id="GO:0000287">
    <property type="term" value="F:magnesium ion binding"/>
    <property type="evidence" value="ECO:0007669"/>
    <property type="project" value="InterPro"/>
</dbReference>
<dbReference type="GO" id="GO:0002020">
    <property type="term" value="F:protease binding"/>
    <property type="evidence" value="ECO:0000353"/>
    <property type="project" value="ARUK-UCL"/>
</dbReference>
<dbReference type="GO" id="GO:0006897">
    <property type="term" value="P:endocytosis"/>
    <property type="evidence" value="ECO:0000318"/>
    <property type="project" value="GO_Central"/>
</dbReference>
<dbReference type="GO" id="GO:1903542">
    <property type="term" value="P:negative regulation of exosomal secretion"/>
    <property type="evidence" value="ECO:0000315"/>
    <property type="project" value="UniProtKB"/>
</dbReference>
<dbReference type="GO" id="GO:0048812">
    <property type="term" value="P:neuron projection morphogenesis"/>
    <property type="evidence" value="ECO:0000250"/>
    <property type="project" value="UniProtKB"/>
</dbReference>
<dbReference type="GO" id="GO:0045332">
    <property type="term" value="P:phospholipid translocation"/>
    <property type="evidence" value="ECO:0000318"/>
    <property type="project" value="GO_Central"/>
</dbReference>
<dbReference type="GO" id="GO:2001135">
    <property type="term" value="P:regulation of endocytic recycling"/>
    <property type="evidence" value="ECO:0000315"/>
    <property type="project" value="UniProtKB"/>
</dbReference>
<dbReference type="GO" id="GO:1905279">
    <property type="term" value="P:regulation of retrograde transport, endosome to Golgi"/>
    <property type="evidence" value="ECO:0000315"/>
    <property type="project" value="UniProtKB"/>
</dbReference>
<dbReference type="GO" id="GO:0006890">
    <property type="term" value="P:retrograde vesicle-mediated transport, Golgi to endoplasmic reticulum"/>
    <property type="evidence" value="ECO:0000318"/>
    <property type="project" value="GO_Central"/>
</dbReference>
<dbReference type="CDD" id="cd07541">
    <property type="entry name" value="P-type_ATPase_APLT_Neo1-like"/>
    <property type="match status" value="1"/>
</dbReference>
<dbReference type="FunFam" id="3.40.1110.10:FF:000008">
    <property type="entry name" value="Phospholipid-transporting ATPase"/>
    <property type="match status" value="1"/>
</dbReference>
<dbReference type="FunFam" id="3.40.50.1000:FF:000009">
    <property type="entry name" value="Phospholipid-transporting ATPase"/>
    <property type="match status" value="1"/>
</dbReference>
<dbReference type="Gene3D" id="3.40.1110.10">
    <property type="entry name" value="Calcium-transporting ATPase, cytoplasmic domain N"/>
    <property type="match status" value="1"/>
</dbReference>
<dbReference type="Gene3D" id="2.70.150.10">
    <property type="entry name" value="Calcium-transporting ATPase, cytoplasmic transduction domain A"/>
    <property type="match status" value="1"/>
</dbReference>
<dbReference type="Gene3D" id="3.40.50.1000">
    <property type="entry name" value="HAD superfamily/HAD-like"/>
    <property type="match status" value="1"/>
</dbReference>
<dbReference type="InterPro" id="IPR023299">
    <property type="entry name" value="ATPase_P-typ_cyto_dom_N"/>
</dbReference>
<dbReference type="InterPro" id="IPR018303">
    <property type="entry name" value="ATPase_P-typ_P_site"/>
</dbReference>
<dbReference type="InterPro" id="IPR023298">
    <property type="entry name" value="ATPase_P-typ_TM_dom_sf"/>
</dbReference>
<dbReference type="InterPro" id="IPR008250">
    <property type="entry name" value="ATPase_P-typ_transduc_dom_A_sf"/>
</dbReference>
<dbReference type="InterPro" id="IPR036412">
    <property type="entry name" value="HAD-like_sf"/>
</dbReference>
<dbReference type="InterPro" id="IPR023214">
    <property type="entry name" value="HAD_sf"/>
</dbReference>
<dbReference type="InterPro" id="IPR006539">
    <property type="entry name" value="P-type_ATPase_IV"/>
</dbReference>
<dbReference type="InterPro" id="IPR032631">
    <property type="entry name" value="P-type_ATPase_N"/>
</dbReference>
<dbReference type="InterPro" id="IPR001757">
    <property type="entry name" value="P_typ_ATPase"/>
</dbReference>
<dbReference type="InterPro" id="IPR032630">
    <property type="entry name" value="P_typ_ATPase_c"/>
</dbReference>
<dbReference type="InterPro" id="IPR044492">
    <property type="entry name" value="P_typ_ATPase_HD_dom"/>
</dbReference>
<dbReference type="NCBIfam" id="TIGR01652">
    <property type="entry name" value="ATPase-Plipid"/>
    <property type="match status" value="1"/>
</dbReference>
<dbReference type="NCBIfam" id="TIGR01494">
    <property type="entry name" value="ATPase_P-type"/>
    <property type="match status" value="2"/>
</dbReference>
<dbReference type="PANTHER" id="PTHR24092:SF49">
    <property type="entry name" value="PHOSPHOLIPID-TRANSPORTING ATPASE IIA-RELATED"/>
    <property type="match status" value="1"/>
</dbReference>
<dbReference type="PANTHER" id="PTHR24092">
    <property type="entry name" value="PROBABLE PHOSPHOLIPID-TRANSPORTING ATPASE"/>
    <property type="match status" value="1"/>
</dbReference>
<dbReference type="Pfam" id="PF13246">
    <property type="entry name" value="Cation_ATPase"/>
    <property type="match status" value="1"/>
</dbReference>
<dbReference type="Pfam" id="PF00122">
    <property type="entry name" value="E1-E2_ATPase"/>
    <property type="match status" value="1"/>
</dbReference>
<dbReference type="Pfam" id="PF00702">
    <property type="entry name" value="Hydrolase"/>
    <property type="match status" value="1"/>
</dbReference>
<dbReference type="Pfam" id="PF16212">
    <property type="entry name" value="PhoLip_ATPase_C"/>
    <property type="match status" value="1"/>
</dbReference>
<dbReference type="Pfam" id="PF16209">
    <property type="entry name" value="PhoLip_ATPase_N"/>
    <property type="match status" value="1"/>
</dbReference>
<dbReference type="PRINTS" id="PR00119">
    <property type="entry name" value="CATATPASE"/>
</dbReference>
<dbReference type="SFLD" id="SFLDS00003">
    <property type="entry name" value="Haloacid_Dehalogenase"/>
    <property type="match status" value="1"/>
</dbReference>
<dbReference type="SFLD" id="SFLDF00027">
    <property type="entry name" value="p-type_atpase"/>
    <property type="match status" value="1"/>
</dbReference>
<dbReference type="SUPFAM" id="SSF81653">
    <property type="entry name" value="Calcium ATPase, transduction domain A"/>
    <property type="match status" value="1"/>
</dbReference>
<dbReference type="SUPFAM" id="SSF81665">
    <property type="entry name" value="Calcium ATPase, transmembrane domain M"/>
    <property type="match status" value="1"/>
</dbReference>
<dbReference type="SUPFAM" id="SSF56784">
    <property type="entry name" value="HAD-like"/>
    <property type="match status" value="1"/>
</dbReference>
<dbReference type="SUPFAM" id="SSF81660">
    <property type="entry name" value="Metal cation-transporting ATPase, ATP-binding domain N"/>
    <property type="match status" value="1"/>
</dbReference>
<dbReference type="PROSITE" id="PS00154">
    <property type="entry name" value="ATPASE_E1_E2"/>
    <property type="match status" value="1"/>
</dbReference>
<protein>
    <recommendedName>
        <fullName>Probable phospholipid-transporting ATPase IIA</fullName>
        <ecNumber evidence="18">7.6.2.1</ecNumber>
    </recommendedName>
    <alternativeName>
        <fullName>ATPase class II type 9A</fullName>
    </alternativeName>
</protein>
<organism>
    <name type="scientific">Homo sapiens</name>
    <name type="common">Human</name>
    <dbReference type="NCBI Taxonomy" id="9606"/>
    <lineage>
        <taxon>Eukaryota</taxon>
        <taxon>Metazoa</taxon>
        <taxon>Chordata</taxon>
        <taxon>Craniata</taxon>
        <taxon>Vertebrata</taxon>
        <taxon>Euteleostomi</taxon>
        <taxon>Mammalia</taxon>
        <taxon>Eutheria</taxon>
        <taxon>Euarchontoglires</taxon>
        <taxon>Primates</taxon>
        <taxon>Haplorrhini</taxon>
        <taxon>Catarrhini</taxon>
        <taxon>Hominidae</taxon>
        <taxon>Homo</taxon>
    </lineage>
</organism>
<name>ATP9A_HUMAN</name>
<comment type="function">
    <text evidence="1 9 10 11 14">Plays a role in regulating membrane trafficking of cargo proteins, namely endosome to plasma membrane recycling, probably acting through RAB5 and RAB11 activation (PubMed:27733620, PubMed:30213940, PubMed:36604604). Also involved in endosome to trans-Golgi network retrograde transport (PubMed:27733620, PubMed:30213940). In complex with MON2 and DOP1B, regulates SNX3 retromer-mediated endosomal sorting of WLS, a transporter of Wnt morphogens in developing tissues. Participates in the formation of endosomal carriers that direct WLS trafficking back to Golgi, away from lysosomal degradation (PubMed:30213940). Appears to be implicated in intercellular communication by negatively regulating the release of exosomes (PubMed:30947313). The flippase activity towards membrane lipids and its role in membrane asymmetry remains to be proved (PubMed:30947313). Required for the maintenance of neurite morphology and synaptic transmission (By similarity).</text>
</comment>
<comment type="catalytic activity">
    <reaction evidence="18">
        <text>ATP + H2O + phospholipidSide 1 = ADP + phosphate + phospholipidSide 2.</text>
        <dbReference type="EC" id="7.6.2.1"/>
    </reaction>
</comment>
<comment type="cofactor">
    <cofactor evidence="3">
        <name>Mg(2+)</name>
        <dbReference type="ChEBI" id="CHEBI:18420"/>
    </cofactor>
</comment>
<comment type="subunit">
    <text evidence="10 14">Heterotrimer with MON2 and DOP1B; this complex regulates SNX3-retromer mediated endosomal sorting of WLS (PubMed:30213940). Interacts with RAB5A and RAB11A (PubMed:36604604).</text>
</comment>
<comment type="subcellular location">
    <subcellularLocation>
        <location evidence="8 9 10">Early endosome membrane</location>
        <topology evidence="7">Multi-pass membrane protein</topology>
    </subcellularLocation>
    <subcellularLocation>
        <location evidence="8 9">Recycling endosome membrane</location>
        <topology evidence="7">Multi-pass membrane protein</topology>
    </subcellularLocation>
    <subcellularLocation>
        <location evidence="14">Late endosome membrane</location>
    </subcellularLocation>
    <subcellularLocation>
        <location evidence="8 9 10">Golgi apparatus</location>
        <location evidence="8 9 10">trans-Golgi network membrane</location>
        <topology evidence="7">Multi-pass membrane protein</topology>
    </subcellularLocation>
    <subcellularLocation>
        <location evidence="11">Cell membrane</location>
        <topology>Multi-pass membrane protein</topology>
    </subcellularLocation>
    <text evidence="8 11">Efficient exit from the endoplasmic reticulum does not require TMEM30A, nor TMEM30B (PubMed:21914794). Transiently expressed in the cell membrane (PubMed:30947313).</text>
</comment>
<comment type="alternative products">
    <event type="alternative splicing"/>
    <isoform>
        <id>O75110-1</id>
        <name>Long</name>
        <sequence type="displayed"/>
    </isoform>
    <isoform>
        <id>O75110-2</id>
        <name>Short</name>
        <sequence type="described" ref="VSP_000432"/>
    </isoform>
</comment>
<comment type="disease" evidence="12 13 14">
    <disease id="DI-06608">
        <name>Neurodevelopmental disorder with poor growth and behavioral abnormalities</name>
        <acronym>NEDGBA</acronym>
        <description>An autosomal recessive disorder characterized by global developmental delay, impaired intellectual development, absent speech, and behavioral abnormalities, including hyperactivity and attention deficit disorder. Affected individuals show failure to thrive with poor overall growth, and some have microcephaly. Additional features may include non-specific facial dysmorphism, hypotonia, and feeding difficulties.</description>
        <dbReference type="MIM" id="620242"/>
    </disease>
    <text>The disease is caused by variants affecting the gene represented in this entry.</text>
</comment>
<comment type="similarity">
    <text evidence="17">Belongs to the cation transport ATPase (P-type) (TC 3.A.3) family. Type IV subfamily.</text>
</comment>
<comment type="sequence caution" evidence="17">
    <conflict type="erroneous initiation">
        <sequence resource="EMBL-CDS" id="BAD18775"/>
    </conflict>
</comment>
<accession>O75110</accession>
<accession>E1P5Y3</accession>
<accession>E1P5Y4</accession>
<accession>Q5TFW5</accession>
<accession>Q5TFW6</accession>
<accession>Q5TFW9</accession>
<accession>Q6ZMF3</accession>
<accession>Q9NQK6</accession>
<accession>Q9NQK7</accession>
<evidence type="ECO:0000250" key="1">
    <source>
        <dbReference type="UniProtKB" id="O70228"/>
    </source>
</evidence>
<evidence type="ECO:0000250" key="2">
    <source>
        <dbReference type="UniProtKB" id="P04191"/>
    </source>
</evidence>
<evidence type="ECO:0000250" key="3">
    <source>
        <dbReference type="UniProtKB" id="P40527"/>
    </source>
</evidence>
<evidence type="ECO:0000250" key="4">
    <source>
        <dbReference type="UniProtKB" id="Q8NB49"/>
    </source>
</evidence>
<evidence type="ECO:0000250" key="5">
    <source>
        <dbReference type="UniProtKB" id="Q9HD20"/>
    </source>
</evidence>
<evidence type="ECO:0000250" key="6">
    <source>
        <dbReference type="UniProtKB" id="Q9Y2Q0"/>
    </source>
</evidence>
<evidence type="ECO:0000255" key="7"/>
<evidence type="ECO:0000269" key="8">
    <source>
    </source>
</evidence>
<evidence type="ECO:0000269" key="9">
    <source>
    </source>
</evidence>
<evidence type="ECO:0000269" key="10">
    <source>
    </source>
</evidence>
<evidence type="ECO:0000269" key="11">
    <source>
    </source>
</evidence>
<evidence type="ECO:0000269" key="12">
    <source>
    </source>
</evidence>
<evidence type="ECO:0000269" key="13">
    <source>
    </source>
</evidence>
<evidence type="ECO:0000269" key="14">
    <source>
    </source>
</evidence>
<evidence type="ECO:0000303" key="15">
    <source>
    </source>
</evidence>
<evidence type="ECO:0000303" key="16">
    <source>
    </source>
</evidence>
<evidence type="ECO:0000305" key="17"/>
<evidence type="ECO:0000305" key="18">
    <source>
    </source>
</evidence>
<evidence type="ECO:0000312" key="19">
    <source>
        <dbReference type="HGNC" id="HGNC:13540"/>
    </source>
</evidence>
<evidence type="ECO:0007744" key="20">
    <source>
    </source>
</evidence>
<reference key="1">
    <citation type="journal article" date="2001" name="Nature">
        <title>The DNA sequence and comparative analysis of human chromosome 20.</title>
        <authorList>
            <person name="Deloukas P."/>
            <person name="Matthews L.H."/>
            <person name="Ashurst J.L."/>
            <person name="Burton J."/>
            <person name="Gilbert J.G.R."/>
            <person name="Jones M."/>
            <person name="Stavrides G."/>
            <person name="Almeida J.P."/>
            <person name="Babbage A.K."/>
            <person name="Bagguley C.L."/>
            <person name="Bailey J."/>
            <person name="Barlow K.F."/>
            <person name="Bates K.N."/>
            <person name="Beard L.M."/>
            <person name="Beare D.M."/>
            <person name="Beasley O.P."/>
            <person name="Bird C.P."/>
            <person name="Blakey S.E."/>
            <person name="Bridgeman A.M."/>
            <person name="Brown A.J."/>
            <person name="Buck D."/>
            <person name="Burrill W.D."/>
            <person name="Butler A.P."/>
            <person name="Carder C."/>
            <person name="Carter N.P."/>
            <person name="Chapman J.C."/>
            <person name="Clamp M."/>
            <person name="Clark G."/>
            <person name="Clark L.N."/>
            <person name="Clark S.Y."/>
            <person name="Clee C.M."/>
            <person name="Clegg S."/>
            <person name="Cobley V.E."/>
            <person name="Collier R.E."/>
            <person name="Connor R.E."/>
            <person name="Corby N.R."/>
            <person name="Coulson A."/>
            <person name="Coville G.J."/>
            <person name="Deadman R."/>
            <person name="Dhami P.D."/>
            <person name="Dunn M."/>
            <person name="Ellington A.G."/>
            <person name="Frankland J.A."/>
            <person name="Fraser A."/>
            <person name="French L."/>
            <person name="Garner P."/>
            <person name="Grafham D.V."/>
            <person name="Griffiths C."/>
            <person name="Griffiths M.N.D."/>
            <person name="Gwilliam R."/>
            <person name="Hall R.E."/>
            <person name="Hammond S."/>
            <person name="Harley J.L."/>
            <person name="Heath P.D."/>
            <person name="Ho S."/>
            <person name="Holden J.L."/>
            <person name="Howden P.J."/>
            <person name="Huckle E."/>
            <person name="Hunt A.R."/>
            <person name="Hunt S.E."/>
            <person name="Jekosch K."/>
            <person name="Johnson C.M."/>
            <person name="Johnson D."/>
            <person name="Kay M.P."/>
            <person name="Kimberley A.M."/>
            <person name="King A."/>
            <person name="Knights A."/>
            <person name="Laird G.K."/>
            <person name="Lawlor S."/>
            <person name="Lehvaeslaiho M.H."/>
            <person name="Leversha M.A."/>
            <person name="Lloyd C."/>
            <person name="Lloyd D.M."/>
            <person name="Lovell J.D."/>
            <person name="Marsh V.L."/>
            <person name="Martin S.L."/>
            <person name="McConnachie L.J."/>
            <person name="McLay K."/>
            <person name="McMurray A.A."/>
            <person name="Milne S.A."/>
            <person name="Mistry D."/>
            <person name="Moore M.J.F."/>
            <person name="Mullikin J.C."/>
            <person name="Nickerson T."/>
            <person name="Oliver K."/>
            <person name="Parker A."/>
            <person name="Patel R."/>
            <person name="Pearce T.A.V."/>
            <person name="Peck A.I."/>
            <person name="Phillimore B.J.C.T."/>
            <person name="Prathalingam S.R."/>
            <person name="Plumb R.W."/>
            <person name="Ramsay H."/>
            <person name="Rice C.M."/>
            <person name="Ross M.T."/>
            <person name="Scott C.E."/>
            <person name="Sehra H.K."/>
            <person name="Shownkeen R."/>
            <person name="Sims S."/>
            <person name="Skuce C.D."/>
            <person name="Smith M.L."/>
            <person name="Soderlund C."/>
            <person name="Steward C.A."/>
            <person name="Sulston J.E."/>
            <person name="Swann R.M."/>
            <person name="Sycamore N."/>
            <person name="Taylor R."/>
            <person name="Tee L."/>
            <person name="Thomas D.W."/>
            <person name="Thorpe A."/>
            <person name="Tracey A."/>
            <person name="Tromans A.C."/>
            <person name="Vaudin M."/>
            <person name="Wall M."/>
            <person name="Wallis J.M."/>
            <person name="Whitehead S.L."/>
            <person name="Whittaker P."/>
            <person name="Willey D.L."/>
            <person name="Williams L."/>
            <person name="Williams S.A."/>
            <person name="Wilming L."/>
            <person name="Wray P.W."/>
            <person name="Hubbard T."/>
            <person name="Durbin R.M."/>
            <person name="Bentley D.R."/>
            <person name="Beck S."/>
            <person name="Rogers J."/>
        </authorList>
    </citation>
    <scope>NUCLEOTIDE SEQUENCE [LARGE SCALE GENOMIC DNA]</scope>
</reference>
<reference key="2">
    <citation type="submission" date="2005-09" db="EMBL/GenBank/DDBJ databases">
        <authorList>
            <person name="Mural R.J."/>
            <person name="Istrail S."/>
            <person name="Sutton G.G."/>
            <person name="Florea L."/>
            <person name="Halpern A.L."/>
            <person name="Mobarry C.M."/>
            <person name="Lippert R."/>
            <person name="Walenz B."/>
            <person name="Shatkay H."/>
            <person name="Dew I."/>
            <person name="Miller J.R."/>
            <person name="Flanigan M.J."/>
            <person name="Edwards N.J."/>
            <person name="Bolanos R."/>
            <person name="Fasulo D."/>
            <person name="Halldorsson B.V."/>
            <person name="Hannenhalli S."/>
            <person name="Turner R."/>
            <person name="Yooseph S."/>
            <person name="Lu F."/>
            <person name="Nusskern D.R."/>
            <person name="Shue B.C."/>
            <person name="Zheng X.H."/>
            <person name="Zhong F."/>
            <person name="Delcher A.L."/>
            <person name="Huson D.H."/>
            <person name="Kravitz S.A."/>
            <person name="Mouchard L."/>
            <person name="Reinert K."/>
            <person name="Remington K.A."/>
            <person name="Clark A.G."/>
            <person name="Waterman M.S."/>
            <person name="Eichler E.E."/>
            <person name="Adams M.D."/>
            <person name="Hunkapiller M.W."/>
            <person name="Myers E.W."/>
            <person name="Venter J.C."/>
        </authorList>
    </citation>
    <scope>NUCLEOTIDE SEQUENCE [LARGE SCALE GENOMIC DNA]</scope>
</reference>
<reference key="3">
    <citation type="journal article" date="1998" name="DNA Res.">
        <title>Prediction of the coding sequences of unidentified human genes. X. The complete sequences of 100 new cDNA clones from brain which can code for large proteins in vitro.</title>
        <authorList>
            <person name="Ishikawa K."/>
            <person name="Nagase T."/>
            <person name="Suyama M."/>
            <person name="Miyajima N."/>
            <person name="Tanaka A."/>
            <person name="Kotani H."/>
            <person name="Nomura N."/>
            <person name="Ohara O."/>
        </authorList>
    </citation>
    <scope>NUCLEOTIDE SEQUENCE [LARGE SCALE MRNA] OF 15-1047 (ISOFORM SHORT)</scope>
    <source>
        <tissue>Brain</tissue>
    </source>
</reference>
<reference key="4">
    <citation type="journal article" date="2004" name="Nat. Genet.">
        <title>Complete sequencing and characterization of 21,243 full-length human cDNAs.</title>
        <authorList>
            <person name="Ota T."/>
            <person name="Suzuki Y."/>
            <person name="Nishikawa T."/>
            <person name="Otsuki T."/>
            <person name="Sugiyama T."/>
            <person name="Irie R."/>
            <person name="Wakamatsu A."/>
            <person name="Hayashi K."/>
            <person name="Sato H."/>
            <person name="Nagai K."/>
            <person name="Kimura K."/>
            <person name="Makita H."/>
            <person name="Sekine M."/>
            <person name="Obayashi M."/>
            <person name="Nishi T."/>
            <person name="Shibahara T."/>
            <person name="Tanaka T."/>
            <person name="Ishii S."/>
            <person name="Yamamoto J."/>
            <person name="Saito K."/>
            <person name="Kawai Y."/>
            <person name="Isono Y."/>
            <person name="Nakamura Y."/>
            <person name="Nagahari K."/>
            <person name="Murakami K."/>
            <person name="Yasuda T."/>
            <person name="Iwayanagi T."/>
            <person name="Wagatsuma M."/>
            <person name="Shiratori A."/>
            <person name="Sudo H."/>
            <person name="Hosoiri T."/>
            <person name="Kaku Y."/>
            <person name="Kodaira H."/>
            <person name="Kondo H."/>
            <person name="Sugawara M."/>
            <person name="Takahashi M."/>
            <person name="Kanda K."/>
            <person name="Yokoi T."/>
            <person name="Furuya T."/>
            <person name="Kikkawa E."/>
            <person name="Omura Y."/>
            <person name="Abe K."/>
            <person name="Kamihara K."/>
            <person name="Katsuta N."/>
            <person name="Sato K."/>
            <person name="Tanikawa M."/>
            <person name="Yamazaki M."/>
            <person name="Ninomiya K."/>
            <person name="Ishibashi T."/>
            <person name="Yamashita H."/>
            <person name="Murakawa K."/>
            <person name="Fujimori K."/>
            <person name="Tanai H."/>
            <person name="Kimata M."/>
            <person name="Watanabe M."/>
            <person name="Hiraoka S."/>
            <person name="Chiba Y."/>
            <person name="Ishida S."/>
            <person name="Ono Y."/>
            <person name="Takiguchi S."/>
            <person name="Watanabe S."/>
            <person name="Yosida M."/>
            <person name="Hotuta T."/>
            <person name="Kusano J."/>
            <person name="Kanehori K."/>
            <person name="Takahashi-Fujii A."/>
            <person name="Hara H."/>
            <person name="Tanase T.-O."/>
            <person name="Nomura Y."/>
            <person name="Togiya S."/>
            <person name="Komai F."/>
            <person name="Hara R."/>
            <person name="Takeuchi K."/>
            <person name="Arita M."/>
            <person name="Imose N."/>
            <person name="Musashino K."/>
            <person name="Yuuki H."/>
            <person name="Oshima A."/>
            <person name="Sasaki N."/>
            <person name="Aotsuka S."/>
            <person name="Yoshikawa Y."/>
            <person name="Matsunawa H."/>
            <person name="Ichihara T."/>
            <person name="Shiohata N."/>
            <person name="Sano S."/>
            <person name="Moriya S."/>
            <person name="Momiyama H."/>
            <person name="Satoh N."/>
            <person name="Takami S."/>
            <person name="Terashima Y."/>
            <person name="Suzuki O."/>
            <person name="Nakagawa S."/>
            <person name="Senoh A."/>
            <person name="Mizoguchi H."/>
            <person name="Goto Y."/>
            <person name="Shimizu F."/>
            <person name="Wakebe H."/>
            <person name="Hishigaki H."/>
            <person name="Watanabe T."/>
            <person name="Sugiyama A."/>
            <person name="Takemoto M."/>
            <person name="Kawakami B."/>
            <person name="Yamazaki M."/>
            <person name="Watanabe K."/>
            <person name="Kumagai A."/>
            <person name="Itakura S."/>
            <person name="Fukuzumi Y."/>
            <person name="Fujimori Y."/>
            <person name="Komiyama M."/>
            <person name="Tashiro H."/>
            <person name="Tanigami A."/>
            <person name="Fujiwara T."/>
            <person name="Ono T."/>
            <person name="Yamada K."/>
            <person name="Fujii Y."/>
            <person name="Ozaki K."/>
            <person name="Hirao M."/>
            <person name="Ohmori Y."/>
            <person name="Kawabata A."/>
            <person name="Hikiji T."/>
            <person name="Kobatake N."/>
            <person name="Inagaki H."/>
            <person name="Ikema Y."/>
            <person name="Okamoto S."/>
            <person name="Okitani R."/>
            <person name="Kawakami T."/>
            <person name="Noguchi S."/>
            <person name="Itoh T."/>
            <person name="Shigeta K."/>
            <person name="Senba T."/>
            <person name="Matsumura K."/>
            <person name="Nakajima Y."/>
            <person name="Mizuno T."/>
            <person name="Morinaga M."/>
            <person name="Sasaki M."/>
            <person name="Togashi T."/>
            <person name="Oyama M."/>
            <person name="Hata H."/>
            <person name="Watanabe M."/>
            <person name="Komatsu T."/>
            <person name="Mizushima-Sugano J."/>
            <person name="Satoh T."/>
            <person name="Shirai Y."/>
            <person name="Takahashi Y."/>
            <person name="Nakagawa K."/>
            <person name="Okumura K."/>
            <person name="Nagase T."/>
            <person name="Nomura N."/>
            <person name="Kikuchi H."/>
            <person name="Masuho Y."/>
            <person name="Yamashita R."/>
            <person name="Nakai K."/>
            <person name="Yada T."/>
            <person name="Nakamura Y."/>
            <person name="Ohara O."/>
            <person name="Isogai T."/>
            <person name="Sugano S."/>
        </authorList>
    </citation>
    <scope>NUCLEOTIDE SEQUENCE [LARGE SCALE MRNA] OF 91-1047 (ISOFORM LONG)</scope>
    <source>
        <tissue>Hepatoma</tissue>
    </source>
</reference>
<reference key="5">
    <citation type="journal article" date="2011" name="J. Biol. Chem.">
        <title>ATP9B, a P4-ATPase (a putative aminophospholipid translocase), localizes to the trans-Golgi network in a CDC50 protein-independent manner.</title>
        <authorList>
            <person name="Takatsu H."/>
            <person name="Baba K."/>
            <person name="Shima T."/>
            <person name="Umino H."/>
            <person name="Kato U."/>
            <person name="Umeda M."/>
            <person name="Nakayama K."/>
            <person name="Shin H.W."/>
        </authorList>
    </citation>
    <scope>SUBCELLULAR LOCATION</scope>
</reference>
<reference key="6">
    <citation type="journal article" date="2012" name="Proc. Natl. Acad. Sci. U.S.A.">
        <title>N-terminal acetylome analyses and functional insights of the N-terminal acetyltransferase NatB.</title>
        <authorList>
            <person name="Van Damme P."/>
            <person name="Lasa M."/>
            <person name="Polevoda B."/>
            <person name="Gazquez C."/>
            <person name="Elosegui-Artola A."/>
            <person name="Kim D.S."/>
            <person name="De Juan-Pardo E."/>
            <person name="Demeyer K."/>
            <person name="Hole K."/>
            <person name="Larrea E."/>
            <person name="Timmerman E."/>
            <person name="Prieto J."/>
            <person name="Arnesen T."/>
            <person name="Sherman F."/>
            <person name="Gevaert K."/>
            <person name="Aldabe R."/>
        </authorList>
    </citation>
    <scope>ACETYLATION [LARGE SCALE ANALYSIS] AT THR-2</scope>
    <scope>CLEAVAGE OF INITIATOR METHIONINE [LARGE SCALE ANALYSIS]</scope>
    <scope>IDENTIFICATION BY MASS SPECTROMETRY [LARGE SCALE ANALYSIS]</scope>
</reference>
<reference key="7">
    <citation type="journal article" date="2016" name="Mol. Biol. Cell">
        <title>The phospholipid flippase ATP9A is required for the recycling pathway from the endosomes to the plasma membrane.</title>
        <authorList>
            <person name="Tanaka Y."/>
            <person name="Ono N."/>
            <person name="Shima T."/>
            <person name="Tanaka G."/>
            <person name="Katoh Y."/>
            <person name="Nakayama K."/>
            <person name="Takatsu H."/>
            <person name="Shin H.W."/>
        </authorList>
    </citation>
    <scope>FUNCTION</scope>
    <scope>SUBCELLULAR LOCATION</scope>
</reference>
<reference key="8">
    <citation type="journal article" date="2018" name="Nat. Commun.">
        <title>SNX3-retromer requires an evolutionary conserved MON2:DOPEY2:ATP9A complex to mediate Wntless sorting and Wnt secretion.</title>
        <authorList>
            <person name="McGough I.J."/>
            <person name="de Groot R.E.A."/>
            <person name="Jellett A.P."/>
            <person name="Betist M.C."/>
            <person name="Varandas K.C."/>
            <person name="Danson C.M."/>
            <person name="Heesom K.J."/>
            <person name="Korswagen H.C."/>
            <person name="Cullen P.J."/>
        </authorList>
    </citation>
    <scope>FUNCTION</scope>
    <scope>CATALYTIC ACTIVITY</scope>
    <scope>INTERACTION WITH MON2 AND DOP1B</scope>
    <scope>SUBCELLULAR LOCATION</scope>
</reference>
<reference key="9">
    <citation type="journal article" date="2019" name="PLoS ONE">
        <title>The P4-ATPase ATP9A is a novel determinant of exosome release.</title>
        <authorList>
            <person name="Naik J."/>
            <person name="Hau C.M."/>
            <person name="Ten Bloemendaal L."/>
            <person name="Mok K.S."/>
            <person name="Hajji N."/>
            <person name="Wehman A.M."/>
            <person name="Meisner S."/>
            <person name="Muncan V."/>
            <person name="Paauw N.J."/>
            <person name="de Vries H.E."/>
            <person name="Nieuwland R."/>
            <person name="Paulusma C.C."/>
            <person name="Bosma P.J."/>
        </authorList>
    </citation>
    <scope>FUNCTION</scope>
    <scope>SUBCELLULAR LOCATION</scope>
</reference>
<reference key="10">
    <citation type="journal article" date="2021" name="NPJ Genom. Med.">
        <title>Biallelic truncation variants in ATP9A are associated with a novel autosomal recessive neurodevelopmental disorder.</title>
        <authorList>
            <person name="Mattioli F."/>
            <person name="Darvish H."/>
            <person name="Paracha S.A."/>
            <person name="Tafakhori A."/>
            <person name="Firouzabadi S.G."/>
            <person name="Chapi M."/>
            <person name="Baig H.M.A."/>
            <person name="Reymond A."/>
            <person name="Antonarakis S.E."/>
            <person name="Ansar M."/>
        </authorList>
    </citation>
    <scope>INVOLVEMENT IN NEDGBA</scope>
</reference>
<reference key="11">
    <citation type="journal article" date="2022" name="J. Med. Genet.">
        <title>Biallelic truncating variants in ATP9A cause a novel neurodevelopmental disorder involving postnatal microcephaly and failure to thrive.</title>
        <authorList>
            <person name="Vogt G."/>
            <person name="Verheyen S."/>
            <person name="Schwartzmann S."/>
            <person name="Ehmke N."/>
            <person name="Potratz C."/>
            <person name="Schwerin-Nagel A."/>
            <person name="Plecko B."/>
            <person name="Holtgrewe M."/>
            <person name="Seelow D."/>
            <person name="Blatterer J."/>
            <person name="Speicher M.R."/>
            <person name="Kornak U."/>
            <person name="Horn D."/>
            <person name="Mundlos S."/>
            <person name="Fischer-Zirnsak B."/>
            <person name="Boschann F."/>
        </authorList>
    </citation>
    <scope>VARIANT NEDGBA 290-ARG--SER-1047 DEL</scope>
    <scope>CHARACTERIZATION OF VARIANT NEDGBA 290-ARG--SER-1047 DEL</scope>
    <scope>INVOLVEMENT IN NEDGBA</scope>
</reference>
<reference key="12">
    <citation type="journal article" date="2023" name="Mol. Psychiatry">
        <title>ATP9A deficiency causes ADHD and aberrant endosomal recycling via modulating RAB5 and RAB11 activity.</title>
        <authorList>
            <person name="Meng T."/>
            <person name="Chen X."/>
            <person name="He Z."/>
            <person name="Huang H."/>
            <person name="Lin S."/>
            <person name="Liu K."/>
            <person name="Bai G."/>
            <person name="Liu H."/>
            <person name="Xu M."/>
            <person name="Zhuang H."/>
            <person name="Zhang Y."/>
            <person name="Waqas A."/>
            <person name="Liu Q."/>
            <person name="Zhang C."/>
            <person name="Sun X.D."/>
            <person name="Huang H."/>
            <person name="Umair M."/>
            <person name="Yan Y."/>
            <person name="Feng D."/>
        </authorList>
    </citation>
    <scope>VARIANTS NEDGBA 145-ARG--SER-1047 DEL; 220-ARG--SER-1047 DEL AND 328-TRP--SER-1047 DEL</scope>
    <scope>CHARACTERIZATION OF VARIANTS NEDGBA 145-ARG--SER-1047 DEL AND 220-ARG--SER-1047 DEL</scope>
    <scope>SUBCELLULAR LOCATION</scope>
    <scope>FUNCTION</scope>
    <scope>INTERACTION WITH RAB5A AND RAB11A</scope>
</reference>
<keyword id="KW-0007">Acetylation</keyword>
<keyword id="KW-0025">Alternative splicing</keyword>
<keyword id="KW-0067">ATP-binding</keyword>
<keyword id="KW-1003">Cell membrane</keyword>
<keyword id="KW-0225">Disease variant</keyword>
<keyword id="KW-0967">Endosome</keyword>
<keyword id="KW-0333">Golgi apparatus</keyword>
<keyword id="KW-0991">Intellectual disability</keyword>
<keyword id="KW-0445">Lipid transport</keyword>
<keyword id="KW-0460">Magnesium</keyword>
<keyword id="KW-0472">Membrane</keyword>
<keyword id="KW-0479">Metal-binding</keyword>
<keyword id="KW-0547">Nucleotide-binding</keyword>
<keyword id="KW-1267">Proteomics identification</keyword>
<keyword id="KW-1185">Reference proteome</keyword>
<keyword id="KW-1278">Translocase</keyword>
<keyword id="KW-0812">Transmembrane</keyword>
<keyword id="KW-1133">Transmembrane helix</keyword>
<keyword id="KW-0813">Transport</keyword>
<feature type="initiator methionine" description="Removed" evidence="20">
    <location>
        <position position="1"/>
    </location>
</feature>
<feature type="chain" id="PRO_0000046375" description="Probable phospholipid-transporting ATPase IIA">
    <location>
        <begin position="2"/>
        <end position="1047"/>
    </location>
</feature>
<feature type="topological domain" description="Cytoplasmic" evidence="7">
    <location>
        <begin position="2"/>
        <end position="69"/>
    </location>
</feature>
<feature type="transmembrane region" description="Helical" evidence="7">
    <location>
        <begin position="70"/>
        <end position="91"/>
    </location>
</feature>
<feature type="topological domain" description="Extracellular" evidence="7">
    <location>
        <begin position="92"/>
        <end position="96"/>
    </location>
</feature>
<feature type="transmembrane region" description="Helical" evidence="7">
    <location>
        <begin position="97"/>
        <end position="119"/>
    </location>
</feature>
<feature type="topological domain" description="Cytoplasmic" evidence="7">
    <location>
        <begin position="120"/>
        <end position="303"/>
    </location>
</feature>
<feature type="transmembrane region" description="Helical" evidence="7">
    <location>
        <begin position="304"/>
        <end position="325"/>
    </location>
</feature>
<feature type="topological domain" description="Extracellular" evidence="7">
    <location>
        <begin position="326"/>
        <end position="332"/>
    </location>
</feature>
<feature type="transmembrane region" description="Helical" evidence="7">
    <location>
        <begin position="333"/>
        <end position="354"/>
    </location>
</feature>
<feature type="topological domain" description="Cytoplasmic" evidence="7">
    <location>
        <begin position="355"/>
        <end position="841"/>
    </location>
</feature>
<feature type="transmembrane region" description="Helical" evidence="7">
    <location>
        <begin position="842"/>
        <end position="862"/>
    </location>
</feature>
<feature type="topological domain" description="Extracellular" evidence="7">
    <location>
        <begin position="863"/>
        <end position="874"/>
    </location>
</feature>
<feature type="transmembrane region" description="Helical" evidence="7">
    <location>
        <begin position="875"/>
        <end position="893"/>
    </location>
</feature>
<feature type="topological domain" description="Cytoplasmic" evidence="7">
    <location>
        <begin position="894"/>
        <end position="923"/>
    </location>
</feature>
<feature type="transmembrane region" description="Helical" evidence="7">
    <location>
        <begin position="924"/>
        <end position="942"/>
    </location>
</feature>
<feature type="topological domain" description="Extracellular" evidence="7">
    <location>
        <begin position="943"/>
        <end position="949"/>
    </location>
</feature>
<feature type="transmembrane region" description="Helical" evidence="7">
    <location>
        <begin position="950"/>
        <end position="972"/>
    </location>
</feature>
<feature type="topological domain" description="Cytoplasmic" evidence="7">
    <location>
        <begin position="973"/>
        <end position="978"/>
    </location>
</feature>
<feature type="transmembrane region" description="Helical" evidence="7">
    <location>
        <begin position="979"/>
        <end position="999"/>
    </location>
</feature>
<feature type="topological domain" description="Extracellular" evidence="7">
    <location>
        <begin position="1000"/>
        <end position="1006"/>
    </location>
</feature>
<feature type="transmembrane region" description="Helical" evidence="7">
    <location>
        <begin position="1007"/>
        <end position="1030"/>
    </location>
</feature>
<feature type="topological domain" description="Cytoplasmic" evidence="7">
    <location>
        <begin position="1031"/>
        <end position="1047"/>
    </location>
</feature>
<feature type="active site" description="4-aspartylphosphate intermediate" evidence="5">
    <location>
        <position position="391"/>
    </location>
</feature>
<feature type="binding site" evidence="6">
    <location>
        <position position="391"/>
    </location>
    <ligand>
        <name>ATP</name>
        <dbReference type="ChEBI" id="CHEBI:30616"/>
    </ligand>
</feature>
<feature type="binding site" evidence="6">
    <location>
        <position position="391"/>
    </location>
    <ligand>
        <name>Mg(2+)</name>
        <dbReference type="ChEBI" id="CHEBI:18420"/>
    </ligand>
</feature>
<feature type="binding site" evidence="6">
    <location>
        <position position="392"/>
    </location>
    <ligand>
        <name>ATP</name>
        <dbReference type="ChEBI" id="CHEBI:30616"/>
    </ligand>
</feature>
<feature type="binding site" evidence="3">
    <location>
        <position position="393"/>
    </location>
    <ligand>
        <name>ATP</name>
        <dbReference type="ChEBI" id="CHEBI:30616"/>
    </ligand>
</feature>
<feature type="binding site" evidence="6">
    <location>
        <position position="393"/>
    </location>
    <ligand>
        <name>Mg(2+)</name>
        <dbReference type="ChEBI" id="CHEBI:18420"/>
    </ligand>
</feature>
<feature type="binding site" evidence="2">
    <location>
        <position position="502"/>
    </location>
    <ligand>
        <name>ATP</name>
        <dbReference type="ChEBI" id="CHEBI:30616"/>
    </ligand>
</feature>
<feature type="binding site" evidence="6">
    <location>
        <position position="544"/>
    </location>
    <ligand>
        <name>ATP</name>
        <dbReference type="ChEBI" id="CHEBI:30616"/>
    </ligand>
</feature>
<feature type="binding site" evidence="3">
    <location>
        <position position="549"/>
    </location>
    <ligand>
        <name>ATP</name>
        <dbReference type="ChEBI" id="CHEBI:30616"/>
    </ligand>
</feature>
<feature type="binding site" evidence="2">
    <location>
        <position position="568"/>
    </location>
    <ligand>
        <name>ATP</name>
        <dbReference type="ChEBI" id="CHEBI:30616"/>
    </ligand>
</feature>
<feature type="binding site" evidence="2">
    <location>
        <position position="597"/>
    </location>
    <ligand>
        <name>ATP</name>
        <dbReference type="ChEBI" id="CHEBI:30616"/>
    </ligand>
</feature>
<feature type="binding site" evidence="2">
    <location>
        <position position="677"/>
    </location>
    <ligand>
        <name>ATP</name>
        <dbReference type="ChEBI" id="CHEBI:30616"/>
    </ligand>
</feature>
<feature type="binding site" evidence="2">
    <location>
        <position position="678"/>
    </location>
    <ligand>
        <name>ATP</name>
        <dbReference type="ChEBI" id="CHEBI:30616"/>
    </ligand>
</feature>
<feature type="binding site" evidence="2">
    <location>
        <position position="679"/>
    </location>
    <ligand>
        <name>ATP</name>
        <dbReference type="ChEBI" id="CHEBI:30616"/>
    </ligand>
</feature>
<feature type="binding site" evidence="2">
    <location>
        <position position="759"/>
    </location>
    <ligand>
        <name>ATP</name>
        <dbReference type="ChEBI" id="CHEBI:30616"/>
    </ligand>
</feature>
<feature type="binding site" evidence="2">
    <location>
        <position position="765"/>
    </location>
    <ligand>
        <name>ATP</name>
        <dbReference type="ChEBI" id="CHEBI:30616"/>
    </ligand>
</feature>
<feature type="binding site" evidence="4">
    <location>
        <position position="785"/>
    </location>
    <ligand>
        <name>Mg(2+)</name>
        <dbReference type="ChEBI" id="CHEBI:18420"/>
    </ligand>
</feature>
<feature type="binding site" evidence="6">
    <location>
        <position position="788"/>
    </location>
    <ligand>
        <name>ATP</name>
        <dbReference type="ChEBI" id="CHEBI:30616"/>
    </ligand>
</feature>
<feature type="binding site" evidence="2">
    <location>
        <position position="789"/>
    </location>
    <ligand>
        <name>ATP</name>
        <dbReference type="ChEBI" id="CHEBI:30616"/>
    </ligand>
</feature>
<feature type="binding site" evidence="4">
    <location>
        <position position="789"/>
    </location>
    <ligand>
        <name>Mg(2+)</name>
        <dbReference type="ChEBI" id="CHEBI:18420"/>
    </ligand>
</feature>
<feature type="modified residue" description="N-acetylthreonine" evidence="20">
    <location>
        <position position="2"/>
    </location>
</feature>
<feature type="splice variant" id="VSP_000432" description="In isoform Short." evidence="16">
    <location>
        <begin position="149"/>
        <end position="269"/>
    </location>
</feature>
<feature type="sequence variant" id="VAR_088107" description="In NEDGBA; results in the formation of aggregated puncta distributed in the cytoplasm." evidence="14">
    <location>
        <begin position="145"/>
        <end position="1047"/>
    </location>
</feature>
<feature type="sequence variant" id="VAR_088108" description="In NEDGBA; results in the formation of aggregated puncta distributed in the cytoplasm." evidence="14">
    <location>
        <begin position="220"/>
        <end position="1047"/>
    </location>
</feature>
<feature type="sequence variant" id="VAR_088109" description="In NEDGBA; severely reduced mRNA expression in homozygous patient cells." evidence="12">
    <location>
        <begin position="290"/>
        <end position="1047"/>
    </location>
</feature>
<feature type="sequence variant" id="VAR_088110" description="In NEDGBA." evidence="14">
    <location>
        <begin position="328"/>
        <end position="1047"/>
    </location>
</feature>
<feature type="sequence conflict" description="In Ref. 4; BAD18775." evidence="17" ref="4">
    <original>F</original>
    <variation>S</variation>
    <location>
        <position position="186"/>
    </location>
</feature>
<feature type="sequence conflict" description="In Ref. 4; BAD18775." evidence="17" ref="4">
    <original>L</original>
    <variation>P</variation>
    <location>
        <position position="415"/>
    </location>
</feature>
<feature type="sequence conflict" description="In Ref. 4; BAD18775." evidence="17" ref="4">
    <original>S</original>
    <variation>P</variation>
    <location>
        <position position="957"/>
    </location>
</feature>
<proteinExistence type="evidence at protein level"/>